<dbReference type="EC" id="1.1.1.272" evidence="2"/>
<dbReference type="EMBL" id="BA000051">
    <property type="protein sequence ID" value="BAE59109.1"/>
    <property type="molecule type" value="Genomic_DNA"/>
</dbReference>
<dbReference type="RefSeq" id="XP_001821111.1">
    <property type="nucleotide sequence ID" value="XM_001821059.1"/>
</dbReference>
<dbReference type="SMR" id="Q2UH56"/>
<dbReference type="STRING" id="510516.Q2UH56"/>
<dbReference type="EnsemblFungi" id="BAE59109">
    <property type="protein sequence ID" value="BAE59109"/>
    <property type="gene ID" value="AO090023000577"/>
</dbReference>
<dbReference type="GeneID" id="5993113"/>
<dbReference type="KEGG" id="aor:AO090023000577"/>
<dbReference type="VEuPathDB" id="FungiDB:AO090023000577"/>
<dbReference type="HOGENOM" id="CLU_019796_1_1_1"/>
<dbReference type="OMA" id="VIVTAHQ"/>
<dbReference type="OrthoDB" id="55995at5052"/>
<dbReference type="Proteomes" id="UP000006564">
    <property type="component" value="Chromosome 3"/>
</dbReference>
<dbReference type="GO" id="GO:0008720">
    <property type="term" value="F:D-lactate dehydrogenase activity"/>
    <property type="evidence" value="ECO:0007669"/>
    <property type="project" value="TreeGrafter"/>
</dbReference>
<dbReference type="GO" id="GO:0051287">
    <property type="term" value="F:NAD binding"/>
    <property type="evidence" value="ECO:0007669"/>
    <property type="project" value="InterPro"/>
</dbReference>
<dbReference type="CDD" id="cd12183">
    <property type="entry name" value="LDH_like_2"/>
    <property type="match status" value="1"/>
</dbReference>
<dbReference type="Gene3D" id="3.40.50.720">
    <property type="entry name" value="NAD(P)-binding Rossmann-like Domain"/>
    <property type="match status" value="2"/>
</dbReference>
<dbReference type="InterPro" id="IPR006139">
    <property type="entry name" value="D-isomer_2_OHA_DH_cat_dom"/>
</dbReference>
<dbReference type="InterPro" id="IPR029753">
    <property type="entry name" value="D-isomer_DH_CS"/>
</dbReference>
<dbReference type="InterPro" id="IPR029752">
    <property type="entry name" value="D-isomer_DH_CS1"/>
</dbReference>
<dbReference type="InterPro" id="IPR006140">
    <property type="entry name" value="D-isomer_DH_NAD-bd"/>
</dbReference>
<dbReference type="InterPro" id="IPR036291">
    <property type="entry name" value="NAD(P)-bd_dom_sf"/>
</dbReference>
<dbReference type="PANTHER" id="PTHR43026">
    <property type="entry name" value="2-HYDROXYACID DEHYDROGENASE HOMOLOG 1-RELATED"/>
    <property type="match status" value="1"/>
</dbReference>
<dbReference type="PANTHER" id="PTHR43026:SF1">
    <property type="entry name" value="2-HYDROXYACID DEHYDROGENASE HOMOLOG 1-RELATED"/>
    <property type="match status" value="1"/>
</dbReference>
<dbReference type="Pfam" id="PF00389">
    <property type="entry name" value="2-Hacid_dh"/>
    <property type="match status" value="1"/>
</dbReference>
<dbReference type="Pfam" id="PF02826">
    <property type="entry name" value="2-Hacid_dh_C"/>
    <property type="match status" value="1"/>
</dbReference>
<dbReference type="SUPFAM" id="SSF52283">
    <property type="entry name" value="Formate/glycerate dehydrogenase catalytic domain-like"/>
    <property type="match status" value="1"/>
</dbReference>
<dbReference type="SUPFAM" id="SSF51735">
    <property type="entry name" value="NAD(P)-binding Rossmann-fold domains"/>
    <property type="match status" value="1"/>
</dbReference>
<dbReference type="PROSITE" id="PS00065">
    <property type="entry name" value="D_2_HYDROXYACID_DH_1"/>
    <property type="match status" value="1"/>
</dbReference>
<dbReference type="PROSITE" id="PS00670">
    <property type="entry name" value="D_2_HYDROXYACID_DH_2"/>
    <property type="match status" value="1"/>
</dbReference>
<dbReference type="PROSITE" id="PS00671">
    <property type="entry name" value="D_2_HYDROXYACID_DH_3"/>
    <property type="match status" value="1"/>
</dbReference>
<comment type="function">
    <text evidence="2">2-hydroxyacid dehydrogenase that is capable to reduce pyruvate, hydroxypyruvate and glyoxylate in a NADPH- or NADH-dependent manner (PubMed:26615399). In contrast to 2-HadhD/morA, does not recognize 4-methyl-2-oxopentanoate (MOA) as a substrate (PubMed:26615399).</text>
</comment>
<comment type="catalytic activity">
    <reaction evidence="2">
        <text>a (2R)-2-hydroxycarboxylate + NADP(+) = a 2-oxocarboxylate + NADPH + H(+)</text>
        <dbReference type="Rhea" id="RHEA:35735"/>
        <dbReference type="ChEBI" id="CHEBI:15378"/>
        <dbReference type="ChEBI" id="CHEBI:35179"/>
        <dbReference type="ChEBI" id="CHEBI:57783"/>
        <dbReference type="ChEBI" id="CHEBI:58314"/>
        <dbReference type="ChEBI" id="CHEBI:58349"/>
        <dbReference type="EC" id="1.1.1.272"/>
    </reaction>
    <physiologicalReaction direction="right-to-left" evidence="2">
        <dbReference type="Rhea" id="RHEA:35737"/>
    </physiologicalReaction>
</comment>
<comment type="biophysicochemical properties">
    <kinetics>
        <KM evidence="2">0.66 mM for pyruvate</KM>
        <KM evidence="2">6.3 mM for hydroxypyruvate</KM>
        <KM evidence="2">43 mM for glyoxylate</KM>
        <text evidence="2">kcat is 14.0 sec(-1) with pyruvate as substrate. kcat is 170.0 sec(-1) with hydroxypyruvate as substrate. kcat is 591.0 sec(-1) with glyoxylate as substrate.</text>
    </kinetics>
</comment>
<comment type="similarity">
    <text evidence="4">Belongs to the D-isomer specific 2-hydroxyacid dehydrogenase family.</text>
</comment>
<feature type="chain" id="PRO_0000455828" description="2-hydroxyacid dehydrogenase A">
    <location>
        <begin position="1"/>
        <end position="347"/>
    </location>
</feature>
<feature type="active site" evidence="1">
    <location>
        <position position="236"/>
    </location>
</feature>
<feature type="active site" evidence="1">
    <location>
        <position position="265"/>
    </location>
</feature>
<feature type="binding site" evidence="1">
    <location>
        <begin position="157"/>
        <end position="158"/>
    </location>
    <ligand>
        <name>NAD(+)</name>
        <dbReference type="ChEBI" id="CHEBI:57540"/>
    </ligand>
</feature>
<feature type="binding site" evidence="1">
    <location>
        <position position="177"/>
    </location>
    <ligand>
        <name>NAD(+)</name>
        <dbReference type="ChEBI" id="CHEBI:57540"/>
    </ligand>
</feature>
<feature type="binding site" evidence="1">
    <location>
        <begin position="234"/>
        <end position="236"/>
    </location>
    <ligand>
        <name>NAD(+)</name>
        <dbReference type="ChEBI" id="CHEBI:57540"/>
    </ligand>
</feature>
<feature type="binding site" evidence="1">
    <location>
        <position position="260"/>
    </location>
    <ligand>
        <name>NAD(+)</name>
        <dbReference type="ChEBI" id="CHEBI:57540"/>
    </ligand>
</feature>
<keyword id="KW-0520">NAD</keyword>
<keyword id="KW-0560">Oxidoreductase</keyword>
<keyword id="KW-1185">Reference proteome</keyword>
<proteinExistence type="evidence at protein level"/>
<gene>
    <name type="ORF">AO090023000577</name>
</gene>
<protein>
    <recommendedName>
        <fullName evidence="3">2-hydroxyacid dehydrogenase A</fullName>
        <shortName evidence="3">2-HadhA</shortName>
        <ecNumber evidence="2">1.1.1.272</ecNumber>
    </recommendedName>
</protein>
<accession>Q2UH56</accession>
<evidence type="ECO:0000250" key="1">
    <source>
        <dbReference type="UniProtKB" id="Q9I3W9"/>
    </source>
</evidence>
<evidence type="ECO:0000269" key="2">
    <source>
    </source>
</evidence>
<evidence type="ECO:0000303" key="3">
    <source>
    </source>
</evidence>
<evidence type="ECO:0000305" key="4"/>
<reference key="1">
    <citation type="journal article" date="2005" name="Nature">
        <title>Genome sequencing and analysis of Aspergillus oryzae.</title>
        <authorList>
            <person name="Machida M."/>
            <person name="Asai K."/>
            <person name="Sano M."/>
            <person name="Tanaka T."/>
            <person name="Kumagai T."/>
            <person name="Terai G."/>
            <person name="Kusumoto K."/>
            <person name="Arima T."/>
            <person name="Akita O."/>
            <person name="Kashiwagi Y."/>
            <person name="Abe K."/>
            <person name="Gomi K."/>
            <person name="Horiuchi H."/>
            <person name="Kitamoto K."/>
            <person name="Kobayashi T."/>
            <person name="Takeuchi M."/>
            <person name="Denning D.W."/>
            <person name="Galagan J.E."/>
            <person name="Nierman W.C."/>
            <person name="Yu J."/>
            <person name="Archer D.B."/>
            <person name="Bennett J.W."/>
            <person name="Bhatnagar D."/>
            <person name="Cleveland T.E."/>
            <person name="Fedorova N.D."/>
            <person name="Gotoh O."/>
            <person name="Horikawa H."/>
            <person name="Hosoyama A."/>
            <person name="Ichinomiya M."/>
            <person name="Igarashi R."/>
            <person name="Iwashita K."/>
            <person name="Juvvadi P.R."/>
            <person name="Kato M."/>
            <person name="Kato Y."/>
            <person name="Kin T."/>
            <person name="Kokubun A."/>
            <person name="Maeda H."/>
            <person name="Maeyama N."/>
            <person name="Maruyama J."/>
            <person name="Nagasaki H."/>
            <person name="Nakajima T."/>
            <person name="Oda K."/>
            <person name="Okada K."/>
            <person name="Paulsen I."/>
            <person name="Sakamoto K."/>
            <person name="Sawano T."/>
            <person name="Takahashi M."/>
            <person name="Takase K."/>
            <person name="Terabayashi Y."/>
            <person name="Wortman J.R."/>
            <person name="Yamada O."/>
            <person name="Yamagata Y."/>
            <person name="Anazawa H."/>
            <person name="Hata Y."/>
            <person name="Koide Y."/>
            <person name="Komori T."/>
            <person name="Koyama Y."/>
            <person name="Minetoki T."/>
            <person name="Suharnan S."/>
            <person name="Tanaka A."/>
            <person name="Isono K."/>
            <person name="Kuhara S."/>
            <person name="Ogasawara N."/>
            <person name="Kikuchi H."/>
        </authorList>
    </citation>
    <scope>NUCLEOTIDE SEQUENCE [LARGE SCALE GENOMIC DNA]</scope>
    <source>
        <strain>ATCC 42149 / RIB 40</strain>
    </source>
</reference>
<reference key="2">
    <citation type="journal article" date="2016" name="Appl. Microbiol. Biotechnol.">
        <title>Novel 4-methyl-2-oxopentanoate reductase involved in synthesis of the Japanese sake flavor, ethyl leucate.</title>
        <authorList>
            <person name="Shimizu M."/>
            <person name="Yamamoto T."/>
            <person name="Okabe N."/>
            <person name="Sakai K."/>
            <person name="Koide E."/>
            <person name="Miyachi Y."/>
            <person name="Kurimoto M."/>
            <person name="Mochizuki M."/>
            <person name="Yoshino-Yasuda S."/>
            <person name="Mitsui S."/>
            <person name="Ito A."/>
            <person name="Murano H."/>
            <person name="Takaya N."/>
            <person name="Kato M."/>
        </authorList>
    </citation>
    <scope>FUNCTION</scope>
    <scope>CATALYTIC ACTIVITY</scope>
    <scope>BIOPHYSICOCHEMICAL PROPERTIES</scope>
</reference>
<organism>
    <name type="scientific">Aspergillus oryzae (strain ATCC 42149 / RIB 40)</name>
    <name type="common">Yellow koji mold</name>
    <dbReference type="NCBI Taxonomy" id="510516"/>
    <lineage>
        <taxon>Eukaryota</taxon>
        <taxon>Fungi</taxon>
        <taxon>Dikarya</taxon>
        <taxon>Ascomycota</taxon>
        <taxon>Pezizomycotina</taxon>
        <taxon>Eurotiomycetes</taxon>
        <taxon>Eurotiomycetidae</taxon>
        <taxon>Eurotiales</taxon>
        <taxon>Aspergillaceae</taxon>
        <taxon>Aspergillus</taxon>
        <taxon>Aspergillus subgen. Circumdati</taxon>
    </lineage>
</organism>
<sequence length="347" mass="37997">MKLAVFSAKSYDKHYFDATLRKHHPALCEITYHSFALSSETVSLAQDSDAVCVFVNDQLDAPVLETLYANGVRAILLRCAGFNNINLQVAEDLGFFVANVPSYSPEAVAEFAVALIQTLNRKTHRAFNRVREGNFNLEGFLGRTLYGKTVGVVGVGRIGLAFAKILHGFGCKLVAYDPFGGEEFKKYGEFVELGDLLAQSDVVSLHCPLTEGTRHVINDENLGRMKKGALLVNTSRGGLVNTKAVINALKSGQLGGVALDVYEEEGALFYNDHSGEIIHDDVLMRLMTFPNVLVCGHQAFFTEEALSEIAGVTLGNLEDFVLKRTCKNSLVREGHLVVPTDKEPVRL</sequence>
<name>HADHA_ASPOR</name>